<sequence>MKTSLFKSLYFQVLTAIAIGILLGHFYPEIGEQMKPLGDGFVKLIKMIIAPVIFCTVVTGIAGMESMKAVGRTGAVALLYFEIVSTIALIIGLIIVNVVQPGAGMNVDPATLDAKAVAVYADQAKDQGIVAFIMDVIPASVIGAFASGNILQVLLFAVLFGFALHRLGSKGQLIFNVIESFSQVIFGIINMIMRLAPIGAFGAMAFTIGKYGVGTLVQLGQLIICFYITCILFVVLVLGSIAKATGFSIFKFIRYIREELLIVLGTSSSESALPRMLDKMEKLGCRKSVVGLVIPTGYSFNLDGTSIYLTMAAVFIAQATNSQMDIVHQITLLIVLLLSSKGAAGVTGSGFIVLAATLSAVGHLPVAGLALILGIDRFMSEARALTNLVGNGVATIVVAKWVKELDHKKLDDVLNNRAPDGKTHELSS</sequence>
<evidence type="ECO:0000255" key="1"/>
<evidence type="ECO:0000269" key="2">
    <source>
    </source>
</evidence>
<evidence type="ECO:0000269" key="3">
    <source>
    </source>
</evidence>
<evidence type="ECO:0000305" key="4"/>
<dbReference type="EMBL" id="U00039">
    <property type="protein sequence ID" value="AAB18505.1"/>
    <property type="molecule type" value="Genomic_DNA"/>
</dbReference>
<dbReference type="EMBL" id="U00096">
    <property type="protein sequence ID" value="AAC76553.1"/>
    <property type="molecule type" value="Genomic_DNA"/>
</dbReference>
<dbReference type="EMBL" id="AP009048">
    <property type="protein sequence ID" value="BAE77766.1"/>
    <property type="molecule type" value="Genomic_DNA"/>
</dbReference>
<dbReference type="PIR" id="S47749">
    <property type="entry name" value="S47749"/>
</dbReference>
<dbReference type="RefSeq" id="NP_417985.1">
    <property type="nucleotide sequence ID" value="NC_000913.3"/>
</dbReference>
<dbReference type="RefSeq" id="WP_000858214.1">
    <property type="nucleotide sequence ID" value="NZ_STEB01000018.1"/>
</dbReference>
<dbReference type="SMR" id="P0A830"/>
<dbReference type="BioGRID" id="4262159">
    <property type="interactions" value="13"/>
</dbReference>
<dbReference type="DIP" id="DIP-47958N"/>
<dbReference type="FunCoup" id="P0A830">
    <property type="interactions" value="452"/>
</dbReference>
<dbReference type="IntAct" id="P0A830">
    <property type="interactions" value="1"/>
</dbReference>
<dbReference type="STRING" id="511145.b3528"/>
<dbReference type="TCDB" id="2.A.23.1.7">
    <property type="family name" value="the dicarboxylate/amino acid:cation (na(+) or h(+)) symporter (daacs) family"/>
</dbReference>
<dbReference type="jPOST" id="P0A830"/>
<dbReference type="PaxDb" id="511145-b3528"/>
<dbReference type="EnsemblBacteria" id="AAC76553">
    <property type="protein sequence ID" value="AAC76553"/>
    <property type="gene ID" value="b3528"/>
</dbReference>
<dbReference type="GeneID" id="93778248"/>
<dbReference type="GeneID" id="948039"/>
<dbReference type="KEGG" id="ecj:JW3496"/>
<dbReference type="KEGG" id="eco:b3528"/>
<dbReference type="PATRIC" id="fig|1411691.4.peg.3189"/>
<dbReference type="EchoBASE" id="EB4140"/>
<dbReference type="eggNOG" id="COG1301">
    <property type="taxonomic scope" value="Bacteria"/>
</dbReference>
<dbReference type="HOGENOM" id="CLU_019375_7_0_6"/>
<dbReference type="InParanoid" id="P0A830"/>
<dbReference type="OMA" id="TWTKEID"/>
<dbReference type="PhylomeDB" id="P0A830"/>
<dbReference type="BioCyc" id="EcoCyc:DCTA-MONOMER"/>
<dbReference type="BioCyc" id="MetaCyc:DCTA-MONOMER"/>
<dbReference type="PRO" id="PR:P0A830"/>
<dbReference type="Proteomes" id="UP000000625">
    <property type="component" value="Chromosome"/>
</dbReference>
<dbReference type="GO" id="GO:0016020">
    <property type="term" value="C:membrane"/>
    <property type="evidence" value="ECO:0000314"/>
    <property type="project" value="EcoCyc"/>
</dbReference>
<dbReference type="GO" id="GO:0005886">
    <property type="term" value="C:plasma membrane"/>
    <property type="evidence" value="ECO:0000314"/>
    <property type="project" value="EcoCyc"/>
</dbReference>
<dbReference type="GO" id="GO:0015138">
    <property type="term" value="F:fumarate transmembrane transporter activity"/>
    <property type="evidence" value="ECO:0000315"/>
    <property type="project" value="EcoCyc"/>
</dbReference>
<dbReference type="GO" id="GO:0015183">
    <property type="term" value="F:L-aspartate transmembrane transporter activity"/>
    <property type="evidence" value="ECO:0000314"/>
    <property type="project" value="EcoCyc"/>
</dbReference>
<dbReference type="GO" id="GO:0015366">
    <property type="term" value="F:malate:proton symporter activity"/>
    <property type="evidence" value="ECO:0000314"/>
    <property type="project" value="EcoCyc"/>
</dbReference>
<dbReference type="GO" id="GO:0015141">
    <property type="term" value="F:succinate transmembrane transporter activity"/>
    <property type="evidence" value="ECO:0000315"/>
    <property type="project" value="EcoCyc"/>
</dbReference>
<dbReference type="GO" id="GO:0006974">
    <property type="term" value="P:DNA damage response"/>
    <property type="evidence" value="ECO:0000270"/>
    <property type="project" value="EcoliWiki"/>
</dbReference>
<dbReference type="GO" id="GO:0015741">
    <property type="term" value="P:fumarate transport"/>
    <property type="evidence" value="ECO:0000314"/>
    <property type="project" value="EcoliWiki"/>
</dbReference>
<dbReference type="GO" id="GO:0070778">
    <property type="term" value="P:L-aspartate transmembrane transport"/>
    <property type="evidence" value="ECO:0000314"/>
    <property type="project" value="EcoCyc"/>
</dbReference>
<dbReference type="FunFam" id="1.10.3860.10:FF:000001">
    <property type="entry name" value="C4-dicarboxylate transport protein"/>
    <property type="match status" value="1"/>
</dbReference>
<dbReference type="Gene3D" id="1.10.3860.10">
    <property type="entry name" value="Sodium:dicarboxylate symporter"/>
    <property type="match status" value="1"/>
</dbReference>
<dbReference type="HAMAP" id="MF_01300">
    <property type="entry name" value="C4_dicarb_transport"/>
    <property type="match status" value="1"/>
</dbReference>
<dbReference type="InterPro" id="IPR023954">
    <property type="entry name" value="C4_dicarb_transport"/>
</dbReference>
<dbReference type="InterPro" id="IPR001991">
    <property type="entry name" value="Na-dicarboxylate_symporter"/>
</dbReference>
<dbReference type="InterPro" id="IPR018107">
    <property type="entry name" value="Na-dicarboxylate_symporter_CS"/>
</dbReference>
<dbReference type="InterPro" id="IPR036458">
    <property type="entry name" value="Na:dicarbo_symporter_sf"/>
</dbReference>
<dbReference type="NCBIfam" id="NF002461">
    <property type="entry name" value="PRK01663.1"/>
    <property type="match status" value="1"/>
</dbReference>
<dbReference type="NCBIfam" id="NF009587">
    <property type="entry name" value="PRK13027.1"/>
    <property type="match status" value="1"/>
</dbReference>
<dbReference type="PANTHER" id="PTHR42865:SF1">
    <property type="entry name" value="AEROBIC C4-DICARBOXYLATE TRANSPORT PROTEIN"/>
    <property type="match status" value="1"/>
</dbReference>
<dbReference type="PANTHER" id="PTHR42865">
    <property type="entry name" value="PROTON/GLUTAMATE-ASPARTATE SYMPORTER"/>
    <property type="match status" value="1"/>
</dbReference>
<dbReference type="Pfam" id="PF00375">
    <property type="entry name" value="SDF"/>
    <property type="match status" value="1"/>
</dbReference>
<dbReference type="PRINTS" id="PR00173">
    <property type="entry name" value="EDTRNSPORT"/>
</dbReference>
<dbReference type="SUPFAM" id="SSF118215">
    <property type="entry name" value="Proton glutamate symport protein"/>
    <property type="match status" value="1"/>
</dbReference>
<dbReference type="PROSITE" id="PS00713">
    <property type="entry name" value="NA_DICARBOXYL_SYMP_1"/>
    <property type="match status" value="1"/>
</dbReference>
<dbReference type="PROSITE" id="PS00714">
    <property type="entry name" value="NA_DICARBOXYL_SYMP_2"/>
    <property type="match status" value="1"/>
</dbReference>
<comment type="function">
    <text evidence="3">Responsible for the aerobic transport of the dicarboxylates fumarate, L- and D-malate and to a lesser extent succinate, from the periplasm across the inner membrane.</text>
</comment>
<comment type="subcellular location">
    <subcellularLocation>
        <location evidence="2">Cell inner membrane</location>
        <topology evidence="2">Multi-pass membrane protein</topology>
    </subcellularLocation>
</comment>
<comment type="induction">
    <text evidence="3">Subject to CRP-mediated catabolite repression. Repressed in the absence of oxygen, induced in the stationary phase and approximately 2-fold by citrate and C4-dicarboxylates.</text>
</comment>
<comment type="disruption phenotype">
    <text evidence="3">Cells lacking this gene are only able to grow after a 2-day lag period on D-malate as sole carbon source.</text>
</comment>
<comment type="similarity">
    <text evidence="4">Belongs to the dicarboxylate/amino acid:cation symporter (DAACS) (TC 2.A.23) family.</text>
</comment>
<organism>
    <name type="scientific">Escherichia coli (strain K12)</name>
    <dbReference type="NCBI Taxonomy" id="83333"/>
    <lineage>
        <taxon>Bacteria</taxon>
        <taxon>Pseudomonadati</taxon>
        <taxon>Pseudomonadota</taxon>
        <taxon>Gammaproteobacteria</taxon>
        <taxon>Enterobacterales</taxon>
        <taxon>Enterobacteriaceae</taxon>
        <taxon>Escherichia</taxon>
    </lineage>
</organism>
<reference key="1">
    <citation type="journal article" date="1994" name="Nucleic Acids Res.">
        <title>Analysis of the Escherichia coli genome. V. DNA sequence of the region from 76.0 to 81.5 minutes.</title>
        <authorList>
            <person name="Sofia H.J."/>
            <person name="Burland V."/>
            <person name="Daniels D.L."/>
            <person name="Plunkett G. III"/>
            <person name="Blattner F.R."/>
        </authorList>
    </citation>
    <scope>NUCLEOTIDE SEQUENCE [LARGE SCALE GENOMIC DNA]</scope>
    <source>
        <strain>K12 / MG1655 / ATCC 47076</strain>
    </source>
</reference>
<reference key="2">
    <citation type="journal article" date="1997" name="Science">
        <title>The complete genome sequence of Escherichia coli K-12.</title>
        <authorList>
            <person name="Blattner F.R."/>
            <person name="Plunkett G. III"/>
            <person name="Bloch C.A."/>
            <person name="Perna N.T."/>
            <person name="Burland V."/>
            <person name="Riley M."/>
            <person name="Collado-Vides J."/>
            <person name="Glasner J.D."/>
            <person name="Rode C.K."/>
            <person name="Mayhew G.F."/>
            <person name="Gregor J."/>
            <person name="Davis N.W."/>
            <person name="Kirkpatrick H.A."/>
            <person name="Goeden M.A."/>
            <person name="Rose D.J."/>
            <person name="Mau B."/>
            <person name="Shao Y."/>
        </authorList>
    </citation>
    <scope>NUCLEOTIDE SEQUENCE [LARGE SCALE GENOMIC DNA]</scope>
    <source>
        <strain>K12 / MG1655 / ATCC 47076</strain>
    </source>
</reference>
<reference key="3">
    <citation type="journal article" date="2006" name="Mol. Syst. Biol.">
        <title>Highly accurate genome sequences of Escherichia coli K-12 strains MG1655 and W3110.</title>
        <authorList>
            <person name="Hayashi K."/>
            <person name="Morooka N."/>
            <person name="Yamamoto Y."/>
            <person name="Fujita K."/>
            <person name="Isono K."/>
            <person name="Choi S."/>
            <person name="Ohtsubo E."/>
            <person name="Baba T."/>
            <person name="Wanner B.L."/>
            <person name="Mori H."/>
            <person name="Horiuchi T."/>
        </authorList>
    </citation>
    <scope>NUCLEOTIDE SEQUENCE [LARGE SCALE GENOMIC DNA]</scope>
    <source>
        <strain>K12 / W3110 / ATCC 27325 / DSM 5911</strain>
    </source>
</reference>
<reference key="4">
    <citation type="journal article" date="1999" name="J. Bacteriol.">
        <title>Inactivation and regulation of the aerobic C(4)-dicarboxylate transport (dctA) gene of Escherichia coli.</title>
        <authorList>
            <person name="Davies S.J."/>
            <person name="Golby P."/>
            <person name="Omrani D."/>
            <person name="Broad S.A."/>
            <person name="Harrington V.L."/>
            <person name="Guest J.R."/>
            <person name="Kelly D.J."/>
            <person name="Andrews S.C."/>
        </authorList>
    </citation>
    <scope>CHARACTERIZATION</scope>
    <source>
        <strain>K12 / W3110 / ATCC 27325 / DSM 5911</strain>
    </source>
</reference>
<reference key="5">
    <citation type="journal article" date="2005" name="Science">
        <title>Global topology analysis of the Escherichia coli inner membrane proteome.</title>
        <authorList>
            <person name="Daley D.O."/>
            <person name="Rapp M."/>
            <person name="Granseth E."/>
            <person name="Melen K."/>
            <person name="Drew D."/>
            <person name="von Heijne G."/>
        </authorList>
    </citation>
    <scope>SUBCELLULAR LOCATION</scope>
    <source>
        <strain>K12 / MG1655 / ATCC 47076</strain>
    </source>
</reference>
<reference key="6">
    <citation type="journal article" date="2006" name="Proc. Natl. Acad. Sci. U.S.A.">
        <title>Systems approach to refining genome annotation.</title>
        <authorList>
            <person name="Reed J.L."/>
            <person name="Patel T.R."/>
            <person name="Chen K.H."/>
            <person name="Joyce A.R."/>
            <person name="Applebee M.K."/>
            <person name="Herring C.D."/>
            <person name="Bui O.T."/>
            <person name="Knight E.M."/>
            <person name="Fong S.S."/>
            <person name="Palsson B.O."/>
        </authorList>
    </citation>
    <scope>FUNCTION AS A D-MALATE TRANSPORTER</scope>
    <scope>ROLE IN D-MALATE UTILIZATION</scope>
    <scope>DISRUPTION PHENOTYPE</scope>
    <scope>INDUCTION</scope>
</reference>
<gene>
    <name type="primary">dctA</name>
    <name type="ordered locus">b3528</name>
    <name type="ordered locus">JW3496</name>
</gene>
<keyword id="KW-0997">Cell inner membrane</keyword>
<keyword id="KW-1003">Cell membrane</keyword>
<keyword id="KW-0472">Membrane</keyword>
<keyword id="KW-1185">Reference proteome</keyword>
<keyword id="KW-0769">Symport</keyword>
<keyword id="KW-0812">Transmembrane</keyword>
<keyword id="KW-1133">Transmembrane helix</keyword>
<keyword id="KW-0813">Transport</keyword>
<accession>P0A830</accession>
<accession>P37312</accession>
<accession>Q2M7J0</accession>
<feature type="chain" id="PRO_0000202094" description="Aerobic C4-dicarboxylate transport protein">
    <location>
        <begin position="1"/>
        <end position="428"/>
    </location>
</feature>
<feature type="transmembrane region" description="Helical" evidence="1">
    <location>
        <begin position="5"/>
        <end position="27"/>
    </location>
</feature>
<feature type="transmembrane region" description="Helical" evidence="1">
    <location>
        <begin position="47"/>
        <end position="64"/>
    </location>
</feature>
<feature type="transmembrane region" description="Helical" evidence="1">
    <location>
        <begin position="77"/>
        <end position="99"/>
    </location>
</feature>
<feature type="transmembrane region" description="Helical" evidence="1">
    <location>
        <begin position="141"/>
        <end position="163"/>
    </location>
</feature>
<feature type="transmembrane region" description="Helical" evidence="1">
    <location>
        <begin position="184"/>
        <end position="206"/>
    </location>
</feature>
<feature type="transmembrane region" description="Helical" evidence="1">
    <location>
        <begin position="219"/>
        <end position="241"/>
    </location>
</feature>
<feature type="transmembrane region" description="Helical" evidence="1">
    <location>
        <begin position="326"/>
        <end position="348"/>
    </location>
</feature>
<feature type="transmembrane region" description="Helical" evidence="1">
    <location>
        <begin position="352"/>
        <end position="374"/>
    </location>
</feature>
<name>DCTA_ECOLI</name>
<protein>
    <recommendedName>
        <fullName>Aerobic C4-dicarboxylate transport protein</fullName>
    </recommendedName>
</protein>
<proteinExistence type="evidence at protein level"/>